<dbReference type="EC" id="2.4.2.7" evidence="1"/>
<dbReference type="EMBL" id="AE017333">
    <property type="protein sequence ID" value="AAU41756.1"/>
    <property type="molecule type" value="Genomic_DNA"/>
</dbReference>
<dbReference type="EMBL" id="CP000002">
    <property type="protein sequence ID" value="AAU24393.1"/>
    <property type="molecule type" value="Genomic_DNA"/>
</dbReference>
<dbReference type="RefSeq" id="WP_003183964.1">
    <property type="nucleotide sequence ID" value="NC_006322.1"/>
</dbReference>
<dbReference type="SMR" id="Q65GQ8"/>
<dbReference type="STRING" id="279010.BL01126"/>
<dbReference type="KEGG" id="bld:BLi02888"/>
<dbReference type="KEGG" id="bli:BL01126"/>
<dbReference type="eggNOG" id="COG0503">
    <property type="taxonomic scope" value="Bacteria"/>
</dbReference>
<dbReference type="HOGENOM" id="CLU_063339_3_0_9"/>
<dbReference type="UniPathway" id="UPA00588">
    <property type="reaction ID" value="UER00646"/>
</dbReference>
<dbReference type="Proteomes" id="UP000000606">
    <property type="component" value="Chromosome"/>
</dbReference>
<dbReference type="Bgee" id="BL01126">
    <property type="expression patterns" value="Expressed in blastula and 12 other cell types or tissues"/>
</dbReference>
<dbReference type="GO" id="GO:0005737">
    <property type="term" value="C:cytoplasm"/>
    <property type="evidence" value="ECO:0007669"/>
    <property type="project" value="UniProtKB-SubCell"/>
</dbReference>
<dbReference type="GO" id="GO:0002055">
    <property type="term" value="F:adenine binding"/>
    <property type="evidence" value="ECO:0007669"/>
    <property type="project" value="TreeGrafter"/>
</dbReference>
<dbReference type="GO" id="GO:0003999">
    <property type="term" value="F:adenine phosphoribosyltransferase activity"/>
    <property type="evidence" value="ECO:0007669"/>
    <property type="project" value="UniProtKB-UniRule"/>
</dbReference>
<dbReference type="GO" id="GO:0016208">
    <property type="term" value="F:AMP binding"/>
    <property type="evidence" value="ECO:0007669"/>
    <property type="project" value="TreeGrafter"/>
</dbReference>
<dbReference type="GO" id="GO:0006168">
    <property type="term" value="P:adenine salvage"/>
    <property type="evidence" value="ECO:0007669"/>
    <property type="project" value="InterPro"/>
</dbReference>
<dbReference type="GO" id="GO:0044209">
    <property type="term" value="P:AMP salvage"/>
    <property type="evidence" value="ECO:0007669"/>
    <property type="project" value="UniProtKB-UniRule"/>
</dbReference>
<dbReference type="GO" id="GO:0006166">
    <property type="term" value="P:purine ribonucleoside salvage"/>
    <property type="evidence" value="ECO:0007669"/>
    <property type="project" value="UniProtKB-KW"/>
</dbReference>
<dbReference type="CDD" id="cd06223">
    <property type="entry name" value="PRTases_typeI"/>
    <property type="match status" value="1"/>
</dbReference>
<dbReference type="FunFam" id="3.40.50.2020:FF:000004">
    <property type="entry name" value="Adenine phosphoribosyltransferase"/>
    <property type="match status" value="1"/>
</dbReference>
<dbReference type="Gene3D" id="3.40.50.2020">
    <property type="match status" value="1"/>
</dbReference>
<dbReference type="HAMAP" id="MF_00004">
    <property type="entry name" value="Aden_phosphoribosyltr"/>
    <property type="match status" value="1"/>
</dbReference>
<dbReference type="InterPro" id="IPR005764">
    <property type="entry name" value="Ade_phspho_trans"/>
</dbReference>
<dbReference type="InterPro" id="IPR000836">
    <property type="entry name" value="PRibTrfase_dom"/>
</dbReference>
<dbReference type="InterPro" id="IPR029057">
    <property type="entry name" value="PRTase-like"/>
</dbReference>
<dbReference type="InterPro" id="IPR050054">
    <property type="entry name" value="UPRTase/APRTase"/>
</dbReference>
<dbReference type="NCBIfam" id="TIGR01090">
    <property type="entry name" value="apt"/>
    <property type="match status" value="1"/>
</dbReference>
<dbReference type="NCBIfam" id="NF002633">
    <property type="entry name" value="PRK02304.1-2"/>
    <property type="match status" value="1"/>
</dbReference>
<dbReference type="NCBIfam" id="NF002634">
    <property type="entry name" value="PRK02304.1-3"/>
    <property type="match status" value="1"/>
</dbReference>
<dbReference type="NCBIfam" id="NF002636">
    <property type="entry name" value="PRK02304.1-5"/>
    <property type="match status" value="1"/>
</dbReference>
<dbReference type="PANTHER" id="PTHR32315">
    <property type="entry name" value="ADENINE PHOSPHORIBOSYLTRANSFERASE"/>
    <property type="match status" value="1"/>
</dbReference>
<dbReference type="PANTHER" id="PTHR32315:SF3">
    <property type="entry name" value="ADENINE PHOSPHORIBOSYLTRANSFERASE"/>
    <property type="match status" value="1"/>
</dbReference>
<dbReference type="Pfam" id="PF00156">
    <property type="entry name" value="Pribosyltran"/>
    <property type="match status" value="1"/>
</dbReference>
<dbReference type="SUPFAM" id="SSF53271">
    <property type="entry name" value="PRTase-like"/>
    <property type="match status" value="1"/>
</dbReference>
<proteinExistence type="inferred from homology"/>
<reference key="1">
    <citation type="journal article" date="2004" name="J. Mol. Microbiol. Biotechnol.">
        <title>The complete genome sequence of Bacillus licheniformis DSM13, an organism with great industrial potential.</title>
        <authorList>
            <person name="Veith B."/>
            <person name="Herzberg C."/>
            <person name="Steckel S."/>
            <person name="Feesche J."/>
            <person name="Maurer K.H."/>
            <person name="Ehrenreich P."/>
            <person name="Baeumer S."/>
            <person name="Henne A."/>
            <person name="Liesegang H."/>
            <person name="Merkl R."/>
            <person name="Ehrenreich A."/>
            <person name="Gottschalk G."/>
        </authorList>
    </citation>
    <scope>NUCLEOTIDE SEQUENCE [LARGE SCALE GENOMIC DNA]</scope>
    <source>
        <strain>ATCC 14580 / DSM 13 / JCM 2505 / CCUG 7422 / NBRC 12200 / NCIMB 9375 / NCTC 10341 / NRRL NRS-1264 / Gibson 46</strain>
    </source>
</reference>
<reference key="2">
    <citation type="journal article" date="2004" name="Genome Biol.">
        <title>Complete genome sequence of the industrial bacterium Bacillus licheniformis and comparisons with closely related Bacillus species.</title>
        <authorList>
            <person name="Rey M.W."/>
            <person name="Ramaiya P."/>
            <person name="Nelson B.A."/>
            <person name="Brody-Karpin S.D."/>
            <person name="Zaretsky E.J."/>
            <person name="Tang M."/>
            <person name="Lopez de Leon A."/>
            <person name="Xiang H."/>
            <person name="Gusti V."/>
            <person name="Clausen I.G."/>
            <person name="Olsen P.B."/>
            <person name="Rasmussen M.D."/>
            <person name="Andersen J.T."/>
            <person name="Joergensen P.L."/>
            <person name="Larsen T.S."/>
            <person name="Sorokin A."/>
            <person name="Bolotin A."/>
            <person name="Lapidus A."/>
            <person name="Galleron N."/>
            <person name="Ehrlich S.D."/>
            <person name="Berka R.M."/>
        </authorList>
    </citation>
    <scope>NUCLEOTIDE SEQUENCE [LARGE SCALE GENOMIC DNA]</scope>
    <source>
        <strain>ATCC 14580 / DSM 13 / JCM 2505 / CCUG 7422 / NBRC 12200 / NCIMB 9375 / NCTC 10341 / NRRL NRS-1264 / Gibson 46</strain>
    </source>
</reference>
<feature type="chain" id="PRO_0000149352" description="Adenine phosphoribosyltransferase">
    <location>
        <begin position="1"/>
        <end position="170"/>
    </location>
</feature>
<organism>
    <name type="scientific">Bacillus licheniformis (strain ATCC 14580 / DSM 13 / JCM 2505 / CCUG 7422 / NBRC 12200 / NCIMB 9375 / NCTC 10341 / NRRL NRS-1264 / Gibson 46)</name>
    <dbReference type="NCBI Taxonomy" id="279010"/>
    <lineage>
        <taxon>Bacteria</taxon>
        <taxon>Bacillati</taxon>
        <taxon>Bacillota</taxon>
        <taxon>Bacilli</taxon>
        <taxon>Bacillales</taxon>
        <taxon>Bacillaceae</taxon>
        <taxon>Bacillus</taxon>
    </lineage>
</organism>
<name>APT_BACLD</name>
<accession>Q65GQ8</accession>
<accession>Q62S67</accession>
<gene>
    <name evidence="1" type="primary">apt</name>
    <name type="ordered locus">BLi02888</name>
    <name type="ordered locus">BL01126</name>
</gene>
<sequence>MDLKKYVTIVPDYPKEGVQFKDITTLMDKGDVYRYATDQIVTYAKEKEIDLVVGPEARGFIIGCPVAYALGVGFAPVRKEGKLPREVIKVDYGLEYGKDVLTIHKDAIKPGQRVLITDDLLATGGTIEATIKLVEELGGVVAGIAFLIELTYLEGRNKLDGYDILTLMQY</sequence>
<comment type="function">
    <text evidence="1">Catalyzes a salvage reaction resulting in the formation of AMP, that is energically less costly than de novo synthesis.</text>
</comment>
<comment type="catalytic activity">
    <reaction evidence="1">
        <text>AMP + diphosphate = 5-phospho-alpha-D-ribose 1-diphosphate + adenine</text>
        <dbReference type="Rhea" id="RHEA:16609"/>
        <dbReference type="ChEBI" id="CHEBI:16708"/>
        <dbReference type="ChEBI" id="CHEBI:33019"/>
        <dbReference type="ChEBI" id="CHEBI:58017"/>
        <dbReference type="ChEBI" id="CHEBI:456215"/>
        <dbReference type="EC" id="2.4.2.7"/>
    </reaction>
</comment>
<comment type="pathway">
    <text evidence="1">Purine metabolism; AMP biosynthesis via salvage pathway; AMP from adenine: step 1/1.</text>
</comment>
<comment type="subunit">
    <text evidence="1">Homodimer.</text>
</comment>
<comment type="subcellular location">
    <subcellularLocation>
        <location evidence="1">Cytoplasm</location>
    </subcellularLocation>
</comment>
<comment type="similarity">
    <text evidence="1">Belongs to the purine/pyrimidine phosphoribosyltransferase family.</text>
</comment>
<evidence type="ECO:0000255" key="1">
    <source>
        <dbReference type="HAMAP-Rule" id="MF_00004"/>
    </source>
</evidence>
<keyword id="KW-0963">Cytoplasm</keyword>
<keyword id="KW-0328">Glycosyltransferase</keyword>
<keyword id="KW-0660">Purine salvage</keyword>
<keyword id="KW-1185">Reference proteome</keyword>
<keyword id="KW-0808">Transferase</keyword>
<protein>
    <recommendedName>
        <fullName evidence="1">Adenine phosphoribosyltransferase</fullName>
        <shortName evidence="1">APRT</shortName>
        <ecNumber evidence="1">2.4.2.7</ecNumber>
    </recommendedName>
</protein>